<proteinExistence type="inferred from homology"/>
<gene>
    <name evidence="1" type="primary">yicR</name>
    <name type="ordered locus">SbBS512_E4063</name>
</gene>
<dbReference type="EMBL" id="CP001063">
    <property type="protein sequence ID" value="ACD07766.1"/>
    <property type="molecule type" value="Genomic_DNA"/>
</dbReference>
<dbReference type="SMR" id="B2TTV2"/>
<dbReference type="STRING" id="344609.SbBS512_E4063"/>
<dbReference type="KEGG" id="sbc:SbBS512_E4063"/>
<dbReference type="HOGENOM" id="CLU_073529_0_1_6"/>
<dbReference type="Proteomes" id="UP000001030">
    <property type="component" value="Chromosome"/>
</dbReference>
<dbReference type="GO" id="GO:0046872">
    <property type="term" value="F:metal ion binding"/>
    <property type="evidence" value="ECO:0007669"/>
    <property type="project" value="UniProtKB-KW"/>
</dbReference>
<dbReference type="GO" id="GO:0008237">
    <property type="term" value="F:metallopeptidase activity"/>
    <property type="evidence" value="ECO:0007669"/>
    <property type="project" value="UniProtKB-KW"/>
</dbReference>
<dbReference type="GO" id="GO:0006508">
    <property type="term" value="P:proteolysis"/>
    <property type="evidence" value="ECO:0007669"/>
    <property type="project" value="UniProtKB-KW"/>
</dbReference>
<dbReference type="CDD" id="cd08071">
    <property type="entry name" value="MPN_DUF2466"/>
    <property type="match status" value="1"/>
</dbReference>
<dbReference type="Gene3D" id="3.40.140.10">
    <property type="entry name" value="Cytidine Deaminase, domain 2"/>
    <property type="match status" value="1"/>
</dbReference>
<dbReference type="HAMAP" id="MF_00018">
    <property type="entry name" value="UPF0758_YicR"/>
    <property type="match status" value="1"/>
</dbReference>
<dbReference type="InterPro" id="IPR037518">
    <property type="entry name" value="MPN"/>
</dbReference>
<dbReference type="InterPro" id="IPR025657">
    <property type="entry name" value="RadC_JAB"/>
</dbReference>
<dbReference type="InterPro" id="IPR010994">
    <property type="entry name" value="RuvA_2-like"/>
</dbReference>
<dbReference type="InterPro" id="IPR001405">
    <property type="entry name" value="UPF0758"/>
</dbReference>
<dbReference type="InterPro" id="IPR020891">
    <property type="entry name" value="UPF0758_CS"/>
</dbReference>
<dbReference type="InterPro" id="IPR046778">
    <property type="entry name" value="UPF0758_N"/>
</dbReference>
<dbReference type="InterPro" id="IPR022820">
    <property type="entry name" value="UPF0758_YicR"/>
</dbReference>
<dbReference type="NCBIfam" id="NF000642">
    <property type="entry name" value="PRK00024.1"/>
    <property type="match status" value="1"/>
</dbReference>
<dbReference type="NCBIfam" id="TIGR00608">
    <property type="entry name" value="radc"/>
    <property type="match status" value="1"/>
</dbReference>
<dbReference type="PANTHER" id="PTHR30471">
    <property type="entry name" value="DNA REPAIR PROTEIN RADC"/>
    <property type="match status" value="1"/>
</dbReference>
<dbReference type="PANTHER" id="PTHR30471:SF3">
    <property type="entry name" value="UPF0758 PROTEIN YEES-RELATED"/>
    <property type="match status" value="1"/>
</dbReference>
<dbReference type="Pfam" id="PF04002">
    <property type="entry name" value="RadC"/>
    <property type="match status" value="1"/>
</dbReference>
<dbReference type="Pfam" id="PF20582">
    <property type="entry name" value="UPF0758_N"/>
    <property type="match status" value="1"/>
</dbReference>
<dbReference type="SUPFAM" id="SSF47781">
    <property type="entry name" value="RuvA domain 2-like"/>
    <property type="match status" value="1"/>
</dbReference>
<dbReference type="PROSITE" id="PS50249">
    <property type="entry name" value="MPN"/>
    <property type="match status" value="1"/>
</dbReference>
<dbReference type="PROSITE" id="PS01302">
    <property type="entry name" value="UPF0758"/>
    <property type="match status" value="1"/>
</dbReference>
<accession>B2TTV2</accession>
<sequence length="222" mass="25225">MKNNSQLLMPREKMLKFGISALTDVELLALFLRTGTRGKDVLTLAKEMLENFGSLYGLLTSEYEQFSGVHGIGVAKFAQLKGIAELARRYYNVRMREESPLLSPEMTREFLQSQLTGEEREIFMVIFLDSQHRVITHSRLFSGTLNHVEVHPREIIREAIKINASALILAHNHPSGCAEPSKADKLITERIIKSCQFMDLRVLDHIVIGRGENVSFAERGWI</sequence>
<evidence type="ECO:0000255" key="1">
    <source>
        <dbReference type="HAMAP-Rule" id="MF_00018"/>
    </source>
</evidence>
<evidence type="ECO:0000255" key="2">
    <source>
        <dbReference type="PROSITE-ProRule" id="PRU01182"/>
    </source>
</evidence>
<reference key="1">
    <citation type="submission" date="2008-05" db="EMBL/GenBank/DDBJ databases">
        <title>Complete sequence of Shigella boydii serotype 18 strain BS512.</title>
        <authorList>
            <person name="Rasko D.A."/>
            <person name="Rosovitz M."/>
            <person name="Maurelli A.T."/>
            <person name="Myers G."/>
            <person name="Seshadri R."/>
            <person name="Cer R."/>
            <person name="Jiang L."/>
            <person name="Ravel J."/>
            <person name="Sebastian Y."/>
        </authorList>
    </citation>
    <scope>NUCLEOTIDE SEQUENCE [LARGE SCALE GENOMIC DNA]</scope>
    <source>
        <strain>CDC 3083-94 / BS512</strain>
    </source>
</reference>
<organism>
    <name type="scientific">Shigella boydii serotype 18 (strain CDC 3083-94 / BS512)</name>
    <dbReference type="NCBI Taxonomy" id="344609"/>
    <lineage>
        <taxon>Bacteria</taxon>
        <taxon>Pseudomonadati</taxon>
        <taxon>Pseudomonadota</taxon>
        <taxon>Gammaproteobacteria</taxon>
        <taxon>Enterobacterales</taxon>
        <taxon>Enterobacteriaceae</taxon>
        <taxon>Shigella</taxon>
    </lineage>
</organism>
<keyword id="KW-0378">Hydrolase</keyword>
<keyword id="KW-0479">Metal-binding</keyword>
<keyword id="KW-0482">Metalloprotease</keyword>
<keyword id="KW-0645">Protease</keyword>
<keyword id="KW-1185">Reference proteome</keyword>
<keyword id="KW-0862">Zinc</keyword>
<comment type="similarity">
    <text evidence="1">Belongs to the UPF0758 family. YicR subfamily.</text>
</comment>
<feature type="chain" id="PRO_1000089847" description="UPF0758 protein YicR">
    <location>
        <begin position="1"/>
        <end position="222"/>
    </location>
</feature>
<feature type="domain" description="MPN" evidence="2">
    <location>
        <begin position="100"/>
        <end position="222"/>
    </location>
</feature>
<feature type="short sequence motif" description="JAMM motif" evidence="2">
    <location>
        <begin position="171"/>
        <end position="184"/>
    </location>
</feature>
<feature type="binding site" evidence="2">
    <location>
        <position position="171"/>
    </location>
    <ligand>
        <name>Zn(2+)</name>
        <dbReference type="ChEBI" id="CHEBI:29105"/>
        <note>catalytic</note>
    </ligand>
</feature>
<feature type="binding site" evidence="2">
    <location>
        <position position="173"/>
    </location>
    <ligand>
        <name>Zn(2+)</name>
        <dbReference type="ChEBI" id="CHEBI:29105"/>
        <note>catalytic</note>
    </ligand>
</feature>
<feature type="binding site" evidence="2">
    <location>
        <position position="184"/>
    </location>
    <ligand>
        <name>Zn(2+)</name>
        <dbReference type="ChEBI" id="CHEBI:29105"/>
        <note>catalytic</note>
    </ligand>
</feature>
<protein>
    <recommendedName>
        <fullName evidence="1">UPF0758 protein YicR</fullName>
    </recommendedName>
</protein>
<name>YICR_SHIB3</name>